<proteinExistence type="inferred from homology"/>
<feature type="chain" id="PRO_0000185316" description="Peptidase T">
    <location>
        <begin position="1"/>
        <end position="408"/>
    </location>
</feature>
<feature type="active site" evidence="1">
    <location>
        <position position="80"/>
    </location>
</feature>
<feature type="active site" description="Proton acceptor" evidence="1">
    <location>
        <position position="174"/>
    </location>
</feature>
<feature type="binding site" evidence="1">
    <location>
        <position position="78"/>
    </location>
    <ligand>
        <name>Zn(2+)</name>
        <dbReference type="ChEBI" id="CHEBI:29105"/>
        <label>1</label>
    </ligand>
</feature>
<feature type="binding site" evidence="1">
    <location>
        <position position="140"/>
    </location>
    <ligand>
        <name>Zn(2+)</name>
        <dbReference type="ChEBI" id="CHEBI:29105"/>
        <label>1</label>
    </ligand>
</feature>
<feature type="binding site" evidence="1">
    <location>
        <position position="140"/>
    </location>
    <ligand>
        <name>Zn(2+)</name>
        <dbReference type="ChEBI" id="CHEBI:29105"/>
        <label>2</label>
    </ligand>
</feature>
<feature type="binding site" evidence="1">
    <location>
        <position position="175"/>
    </location>
    <ligand>
        <name>Zn(2+)</name>
        <dbReference type="ChEBI" id="CHEBI:29105"/>
        <label>2</label>
    </ligand>
</feature>
<feature type="binding site" evidence="1">
    <location>
        <position position="197"/>
    </location>
    <ligand>
        <name>Zn(2+)</name>
        <dbReference type="ChEBI" id="CHEBI:29105"/>
        <label>1</label>
    </ligand>
</feature>
<feature type="binding site" evidence="1">
    <location>
        <position position="379"/>
    </location>
    <ligand>
        <name>Zn(2+)</name>
        <dbReference type="ChEBI" id="CHEBI:29105"/>
        <label>2</label>
    </ligand>
</feature>
<organism>
    <name type="scientific">Staphylococcus aureus (strain Mu50 / ATCC 700699)</name>
    <dbReference type="NCBI Taxonomy" id="158878"/>
    <lineage>
        <taxon>Bacteria</taxon>
        <taxon>Bacillati</taxon>
        <taxon>Bacillota</taxon>
        <taxon>Bacilli</taxon>
        <taxon>Bacillales</taxon>
        <taxon>Staphylococcaceae</taxon>
        <taxon>Staphylococcus</taxon>
    </lineage>
</organism>
<comment type="function">
    <text evidence="1">Cleaves the N-terminal amino acid of tripeptides.</text>
</comment>
<comment type="catalytic activity">
    <reaction evidence="1">
        <text>Release of the N-terminal residue from a tripeptide.</text>
        <dbReference type="EC" id="3.4.11.4"/>
    </reaction>
</comment>
<comment type="cofactor">
    <cofactor evidence="1">
        <name>Zn(2+)</name>
        <dbReference type="ChEBI" id="CHEBI:29105"/>
    </cofactor>
    <text evidence="1">Binds 2 Zn(2+) ions per subunit.</text>
</comment>
<comment type="subcellular location">
    <subcellularLocation>
        <location evidence="1">Cytoplasm</location>
    </subcellularLocation>
</comment>
<comment type="similarity">
    <text evidence="1">Belongs to the peptidase M20B family.</text>
</comment>
<gene>
    <name evidence="1" type="primary">pepT</name>
    <name type="ordered locus">SAV0743</name>
</gene>
<dbReference type="EC" id="3.4.11.4" evidence="1"/>
<dbReference type="EMBL" id="BA000017">
    <property type="protein sequence ID" value="BAB56905.1"/>
    <property type="molecule type" value="Genomic_DNA"/>
</dbReference>
<dbReference type="RefSeq" id="WP_000795811.1">
    <property type="nucleotide sequence ID" value="NC_002758.2"/>
</dbReference>
<dbReference type="SMR" id="P65805"/>
<dbReference type="MEROPS" id="M20.003"/>
<dbReference type="KEGG" id="sav:SAV0743"/>
<dbReference type="HOGENOM" id="CLU_053676_0_0_9"/>
<dbReference type="PhylomeDB" id="P65805"/>
<dbReference type="Proteomes" id="UP000002481">
    <property type="component" value="Chromosome"/>
</dbReference>
<dbReference type="GO" id="GO:0005829">
    <property type="term" value="C:cytosol"/>
    <property type="evidence" value="ECO:0007669"/>
    <property type="project" value="TreeGrafter"/>
</dbReference>
<dbReference type="GO" id="GO:0008237">
    <property type="term" value="F:metallopeptidase activity"/>
    <property type="evidence" value="ECO:0007669"/>
    <property type="project" value="UniProtKB-KW"/>
</dbReference>
<dbReference type="GO" id="GO:0045148">
    <property type="term" value="F:tripeptide aminopeptidase activity"/>
    <property type="evidence" value="ECO:0007669"/>
    <property type="project" value="UniProtKB-UniRule"/>
</dbReference>
<dbReference type="GO" id="GO:0008270">
    <property type="term" value="F:zinc ion binding"/>
    <property type="evidence" value="ECO:0007669"/>
    <property type="project" value="UniProtKB-UniRule"/>
</dbReference>
<dbReference type="GO" id="GO:0043171">
    <property type="term" value="P:peptide catabolic process"/>
    <property type="evidence" value="ECO:0007669"/>
    <property type="project" value="UniProtKB-UniRule"/>
</dbReference>
<dbReference type="GO" id="GO:0006508">
    <property type="term" value="P:proteolysis"/>
    <property type="evidence" value="ECO:0007669"/>
    <property type="project" value="UniProtKB-UniRule"/>
</dbReference>
<dbReference type="CDD" id="cd03892">
    <property type="entry name" value="M20_peptT"/>
    <property type="match status" value="1"/>
</dbReference>
<dbReference type="FunFam" id="3.30.70.360:FF:000002">
    <property type="entry name" value="Peptidase T"/>
    <property type="match status" value="1"/>
</dbReference>
<dbReference type="Gene3D" id="3.30.70.360">
    <property type="match status" value="1"/>
</dbReference>
<dbReference type="Gene3D" id="3.40.630.10">
    <property type="entry name" value="Zn peptidases"/>
    <property type="match status" value="1"/>
</dbReference>
<dbReference type="HAMAP" id="MF_00550">
    <property type="entry name" value="Aminopeptidase_M20"/>
    <property type="match status" value="1"/>
</dbReference>
<dbReference type="InterPro" id="IPR001261">
    <property type="entry name" value="ArgE/DapE_CS"/>
</dbReference>
<dbReference type="InterPro" id="IPR036264">
    <property type="entry name" value="Bact_exopeptidase_dim_dom"/>
</dbReference>
<dbReference type="InterPro" id="IPR002933">
    <property type="entry name" value="Peptidase_M20"/>
</dbReference>
<dbReference type="InterPro" id="IPR011650">
    <property type="entry name" value="Peptidase_M20_dimer"/>
</dbReference>
<dbReference type="InterPro" id="IPR010161">
    <property type="entry name" value="Peptidase_M20B"/>
</dbReference>
<dbReference type="NCBIfam" id="TIGR01882">
    <property type="entry name" value="peptidase-T"/>
    <property type="match status" value="1"/>
</dbReference>
<dbReference type="NCBIfam" id="NF003976">
    <property type="entry name" value="PRK05469.1"/>
    <property type="match status" value="1"/>
</dbReference>
<dbReference type="NCBIfam" id="NF009920">
    <property type="entry name" value="PRK13381.1"/>
    <property type="match status" value="1"/>
</dbReference>
<dbReference type="PANTHER" id="PTHR42994">
    <property type="entry name" value="PEPTIDASE T"/>
    <property type="match status" value="1"/>
</dbReference>
<dbReference type="PANTHER" id="PTHR42994:SF1">
    <property type="entry name" value="PEPTIDASE T"/>
    <property type="match status" value="1"/>
</dbReference>
<dbReference type="Pfam" id="PF07687">
    <property type="entry name" value="M20_dimer"/>
    <property type="match status" value="1"/>
</dbReference>
<dbReference type="Pfam" id="PF01546">
    <property type="entry name" value="Peptidase_M20"/>
    <property type="match status" value="1"/>
</dbReference>
<dbReference type="PIRSF" id="PIRSF037215">
    <property type="entry name" value="Peptidase_M20B"/>
    <property type="match status" value="1"/>
</dbReference>
<dbReference type="SUPFAM" id="SSF55031">
    <property type="entry name" value="Bacterial exopeptidase dimerisation domain"/>
    <property type="match status" value="1"/>
</dbReference>
<dbReference type="SUPFAM" id="SSF53187">
    <property type="entry name" value="Zn-dependent exopeptidases"/>
    <property type="match status" value="1"/>
</dbReference>
<dbReference type="PROSITE" id="PS00758">
    <property type="entry name" value="ARGE_DAPE_CPG2_1"/>
    <property type="match status" value="1"/>
</dbReference>
<dbReference type="PROSITE" id="PS00759">
    <property type="entry name" value="ARGE_DAPE_CPG2_2"/>
    <property type="match status" value="1"/>
</dbReference>
<reference key="1">
    <citation type="journal article" date="2001" name="Lancet">
        <title>Whole genome sequencing of meticillin-resistant Staphylococcus aureus.</title>
        <authorList>
            <person name="Kuroda M."/>
            <person name="Ohta T."/>
            <person name="Uchiyama I."/>
            <person name="Baba T."/>
            <person name="Yuzawa H."/>
            <person name="Kobayashi I."/>
            <person name="Cui L."/>
            <person name="Oguchi A."/>
            <person name="Aoki K."/>
            <person name="Nagai Y."/>
            <person name="Lian J.-Q."/>
            <person name="Ito T."/>
            <person name="Kanamori M."/>
            <person name="Matsumaru H."/>
            <person name="Maruyama A."/>
            <person name="Murakami H."/>
            <person name="Hosoyama A."/>
            <person name="Mizutani-Ui Y."/>
            <person name="Takahashi N.K."/>
            <person name="Sawano T."/>
            <person name="Inoue R."/>
            <person name="Kaito C."/>
            <person name="Sekimizu K."/>
            <person name="Hirakawa H."/>
            <person name="Kuhara S."/>
            <person name="Goto S."/>
            <person name="Yabuzaki J."/>
            <person name="Kanehisa M."/>
            <person name="Yamashita A."/>
            <person name="Oshima K."/>
            <person name="Furuya K."/>
            <person name="Yoshino C."/>
            <person name="Shiba T."/>
            <person name="Hattori M."/>
            <person name="Ogasawara N."/>
            <person name="Hayashi H."/>
            <person name="Hiramatsu K."/>
        </authorList>
    </citation>
    <scope>NUCLEOTIDE SEQUENCE [LARGE SCALE GENOMIC DNA]</scope>
    <source>
        <strain>Mu50 / ATCC 700699</strain>
    </source>
</reference>
<sequence>MKNQLIDRLTRYTTIDTQSDPKSTTTPSTEKQWDLLHLLEKELQQLGLPTDLDENGYLFATLESNIDADVPTVGFLAHVDTSPDFNASNVKPQIIENYDGKPYKLGNTKRVLDPKVFPELNSLVGHTLMVTDGTSLLGADDKAGIVEIMEAICYLQEHPEIKHGTIRIGFTPDEEIGRGPHKFDVDRFNADFAYTMDGSQYGELQYESFNAAEAVITCHGVNVHPGSAKNAMVNAIRLGEQFDSLLPDSEVPERTEGYEGFYHLMNFEGTVEKATLQYIIRDHDKKQFELRKKRILEIRDDINAHFENYPVKVDISDQYFNMAEKILPLPHIIDIPKRVFAKLDIPANTEPIRGGTDGSQLSFMGLPTPNIFTGCGNFHGPYEYASIDVMEKAVQVIIGIVEDIAENH</sequence>
<evidence type="ECO:0000255" key="1">
    <source>
        <dbReference type="HAMAP-Rule" id="MF_00550"/>
    </source>
</evidence>
<protein>
    <recommendedName>
        <fullName evidence="1">Peptidase T</fullName>
        <ecNumber evidence="1">3.4.11.4</ecNumber>
    </recommendedName>
    <alternativeName>
        <fullName evidence="1">Aminotripeptidase</fullName>
        <shortName evidence="1">Tripeptidase</shortName>
    </alternativeName>
    <alternativeName>
        <fullName evidence="1">Tripeptide aminopeptidase</fullName>
    </alternativeName>
</protein>
<keyword id="KW-0031">Aminopeptidase</keyword>
<keyword id="KW-0963">Cytoplasm</keyword>
<keyword id="KW-0378">Hydrolase</keyword>
<keyword id="KW-0479">Metal-binding</keyword>
<keyword id="KW-0482">Metalloprotease</keyword>
<keyword id="KW-0645">Protease</keyword>
<keyword id="KW-0862">Zinc</keyword>
<name>PEPT_STAAM</name>
<accession>P65805</accession>
<accession>Q99VN1</accession>